<sequence length="352" mass="39071">MLELNFSQTLGNHCLTINETLPANGITAIFGVSGAGKTSLINAISGLTRPQKGRIVLNGRVLNDAEKGICLSPEKRRVGYVFQDARLFPHYKVRGNLRYGMAKSMVNQFDKLVALLGIEPLLDRLPGSLSGGEKQRVAIGRALLTAPELLLLDEPLASLDIPRKRELLPYLQRLTREINIPMLYVSHSLDEILHLADRVMVLENGQVKAFGALEEVWGSSVMNPWLPKEQQSSILKVTVLEHHPHYAMTALALGDQHLWVNKLDEPLQAALRIRIQASDVSLVLQPPQQTSIRNVLRAKVVNSYDDNGQVEVELEVGGKTLWARISPWARDELAIKPGLWLYAQIKSVSITA</sequence>
<keyword id="KW-0067">ATP-binding</keyword>
<keyword id="KW-0997">Cell inner membrane</keyword>
<keyword id="KW-1003">Cell membrane</keyword>
<keyword id="KW-0472">Membrane</keyword>
<keyword id="KW-0500">Molybdenum</keyword>
<keyword id="KW-0547">Nucleotide-binding</keyword>
<keyword id="KW-1278">Translocase</keyword>
<keyword id="KW-0813">Transport</keyword>
<reference key="1">
    <citation type="journal article" date="2006" name="Proc. Natl. Acad. Sci. U.S.A.">
        <title>Identification of genes subject to positive selection in uropathogenic strains of Escherichia coli: a comparative genomics approach.</title>
        <authorList>
            <person name="Chen S.L."/>
            <person name="Hung C.-S."/>
            <person name="Xu J."/>
            <person name="Reigstad C.S."/>
            <person name="Magrini V."/>
            <person name="Sabo A."/>
            <person name="Blasiar D."/>
            <person name="Bieri T."/>
            <person name="Meyer R.R."/>
            <person name="Ozersky P."/>
            <person name="Armstrong J.R."/>
            <person name="Fulton R.S."/>
            <person name="Latreille J.P."/>
            <person name="Spieth J."/>
            <person name="Hooton T.M."/>
            <person name="Mardis E.R."/>
            <person name="Hultgren S.J."/>
            <person name="Gordon J.I."/>
        </authorList>
    </citation>
    <scope>NUCLEOTIDE SEQUENCE [LARGE SCALE GENOMIC DNA]</scope>
    <source>
        <strain>UTI89 / UPEC</strain>
    </source>
</reference>
<dbReference type="EC" id="7.3.2.5" evidence="1"/>
<dbReference type="EMBL" id="CP000243">
    <property type="protein sequence ID" value="ABE06249.1"/>
    <property type="molecule type" value="Genomic_DNA"/>
</dbReference>
<dbReference type="RefSeq" id="WP_000891671.1">
    <property type="nucleotide sequence ID" value="NZ_CP064825.1"/>
</dbReference>
<dbReference type="SMR" id="Q1REG5"/>
<dbReference type="KEGG" id="eci:UTI89_C0763"/>
<dbReference type="HOGENOM" id="CLU_000604_1_1_6"/>
<dbReference type="Proteomes" id="UP000001952">
    <property type="component" value="Chromosome"/>
</dbReference>
<dbReference type="GO" id="GO:0005886">
    <property type="term" value="C:plasma membrane"/>
    <property type="evidence" value="ECO:0007669"/>
    <property type="project" value="UniProtKB-SubCell"/>
</dbReference>
<dbReference type="GO" id="GO:0015412">
    <property type="term" value="F:ABC-type molybdate transporter activity"/>
    <property type="evidence" value="ECO:0007669"/>
    <property type="project" value="UniProtKB-EC"/>
</dbReference>
<dbReference type="GO" id="GO:0005524">
    <property type="term" value="F:ATP binding"/>
    <property type="evidence" value="ECO:0007669"/>
    <property type="project" value="UniProtKB-KW"/>
</dbReference>
<dbReference type="GO" id="GO:0016887">
    <property type="term" value="F:ATP hydrolysis activity"/>
    <property type="evidence" value="ECO:0007669"/>
    <property type="project" value="InterPro"/>
</dbReference>
<dbReference type="FunFam" id="2.40.50.100:FF:000037">
    <property type="entry name" value="Molybdenum import ATP-binding protein ModC"/>
    <property type="match status" value="1"/>
</dbReference>
<dbReference type="FunFam" id="3.40.50.300:FF:000634">
    <property type="entry name" value="Molybdenum import ATP-binding protein ModC"/>
    <property type="match status" value="1"/>
</dbReference>
<dbReference type="Gene3D" id="2.40.50.100">
    <property type="match status" value="1"/>
</dbReference>
<dbReference type="Gene3D" id="3.40.50.300">
    <property type="entry name" value="P-loop containing nucleotide triphosphate hydrolases"/>
    <property type="match status" value="1"/>
</dbReference>
<dbReference type="InterPro" id="IPR003593">
    <property type="entry name" value="AAA+_ATPase"/>
</dbReference>
<dbReference type="InterPro" id="IPR003439">
    <property type="entry name" value="ABC_transporter-like_ATP-bd"/>
</dbReference>
<dbReference type="InterPro" id="IPR017871">
    <property type="entry name" value="ABC_transporter-like_CS"/>
</dbReference>
<dbReference type="InterPro" id="IPR008995">
    <property type="entry name" value="Mo/tungstate-bd_C_term_dom"/>
</dbReference>
<dbReference type="InterPro" id="IPR011868">
    <property type="entry name" value="ModC_ABC_ATP-bd"/>
</dbReference>
<dbReference type="InterPro" id="IPR050334">
    <property type="entry name" value="Molybdenum_import_ModC"/>
</dbReference>
<dbReference type="InterPro" id="IPR004606">
    <property type="entry name" value="Mop_domain"/>
</dbReference>
<dbReference type="InterPro" id="IPR027417">
    <property type="entry name" value="P-loop_NTPase"/>
</dbReference>
<dbReference type="InterPro" id="IPR005116">
    <property type="entry name" value="Transp-assoc_OB_typ1"/>
</dbReference>
<dbReference type="NCBIfam" id="TIGR02142">
    <property type="entry name" value="modC_ABC"/>
    <property type="match status" value="1"/>
</dbReference>
<dbReference type="NCBIfam" id="TIGR00638">
    <property type="entry name" value="Mop"/>
    <property type="match status" value="1"/>
</dbReference>
<dbReference type="NCBIfam" id="NF008355">
    <property type="entry name" value="PRK11144.1"/>
    <property type="match status" value="1"/>
</dbReference>
<dbReference type="PANTHER" id="PTHR43514">
    <property type="entry name" value="ABC TRANSPORTER I FAMILY MEMBER 10"/>
    <property type="match status" value="1"/>
</dbReference>
<dbReference type="PANTHER" id="PTHR43514:SF4">
    <property type="entry name" value="ABC TRANSPORTER I FAMILY MEMBER 10"/>
    <property type="match status" value="1"/>
</dbReference>
<dbReference type="Pfam" id="PF00005">
    <property type="entry name" value="ABC_tran"/>
    <property type="match status" value="1"/>
</dbReference>
<dbReference type="Pfam" id="PF03459">
    <property type="entry name" value="TOBE"/>
    <property type="match status" value="1"/>
</dbReference>
<dbReference type="SMART" id="SM00382">
    <property type="entry name" value="AAA"/>
    <property type="match status" value="1"/>
</dbReference>
<dbReference type="SUPFAM" id="SSF50331">
    <property type="entry name" value="MOP-like"/>
    <property type="match status" value="1"/>
</dbReference>
<dbReference type="SUPFAM" id="SSF52540">
    <property type="entry name" value="P-loop containing nucleoside triphosphate hydrolases"/>
    <property type="match status" value="1"/>
</dbReference>
<dbReference type="PROSITE" id="PS00211">
    <property type="entry name" value="ABC_TRANSPORTER_1"/>
    <property type="match status" value="1"/>
</dbReference>
<dbReference type="PROSITE" id="PS50893">
    <property type="entry name" value="ABC_TRANSPORTER_2"/>
    <property type="match status" value="1"/>
</dbReference>
<dbReference type="PROSITE" id="PS51241">
    <property type="entry name" value="MODC"/>
    <property type="match status" value="1"/>
</dbReference>
<dbReference type="PROSITE" id="PS51866">
    <property type="entry name" value="MOP"/>
    <property type="match status" value="1"/>
</dbReference>
<protein>
    <recommendedName>
        <fullName evidence="1">Molybdenum import ATP-binding protein ModC</fullName>
        <ecNumber evidence="1">7.3.2.5</ecNumber>
    </recommendedName>
</protein>
<evidence type="ECO:0000255" key="1">
    <source>
        <dbReference type="HAMAP-Rule" id="MF_01705"/>
    </source>
</evidence>
<evidence type="ECO:0000255" key="2">
    <source>
        <dbReference type="PROSITE-ProRule" id="PRU01213"/>
    </source>
</evidence>
<feature type="chain" id="PRO_0000271671" description="Molybdenum import ATP-binding protein ModC">
    <location>
        <begin position="1"/>
        <end position="352"/>
    </location>
</feature>
<feature type="domain" description="ABC transporter" evidence="1">
    <location>
        <begin position="1"/>
        <end position="229"/>
    </location>
</feature>
<feature type="domain" description="Mop" evidence="2">
    <location>
        <begin position="289"/>
        <end position="352"/>
    </location>
</feature>
<feature type="binding site" evidence="1">
    <location>
        <begin position="31"/>
        <end position="38"/>
    </location>
    <ligand>
        <name>ATP</name>
        <dbReference type="ChEBI" id="CHEBI:30616"/>
    </ligand>
</feature>
<organism>
    <name type="scientific">Escherichia coli (strain UTI89 / UPEC)</name>
    <dbReference type="NCBI Taxonomy" id="364106"/>
    <lineage>
        <taxon>Bacteria</taxon>
        <taxon>Pseudomonadati</taxon>
        <taxon>Pseudomonadota</taxon>
        <taxon>Gammaproteobacteria</taxon>
        <taxon>Enterobacterales</taxon>
        <taxon>Enterobacteriaceae</taxon>
        <taxon>Escherichia</taxon>
    </lineage>
</organism>
<gene>
    <name evidence="1" type="primary">modC</name>
    <name type="ordered locus">UTI89_C0763</name>
</gene>
<name>MODC_ECOUT</name>
<proteinExistence type="inferred from homology"/>
<accession>Q1REG5</accession>
<comment type="function">
    <text evidence="1">Part of the ABC transporter complex ModABC involved in molybdenum import. Responsible for energy coupling to the transport system.</text>
</comment>
<comment type="catalytic activity">
    <reaction evidence="1">
        <text>molybdate(out) + ATP + H2O = molybdate(in) + ADP + phosphate + H(+)</text>
        <dbReference type="Rhea" id="RHEA:22020"/>
        <dbReference type="ChEBI" id="CHEBI:15377"/>
        <dbReference type="ChEBI" id="CHEBI:15378"/>
        <dbReference type="ChEBI" id="CHEBI:30616"/>
        <dbReference type="ChEBI" id="CHEBI:36264"/>
        <dbReference type="ChEBI" id="CHEBI:43474"/>
        <dbReference type="ChEBI" id="CHEBI:456216"/>
        <dbReference type="EC" id="7.3.2.5"/>
    </reaction>
</comment>
<comment type="subunit">
    <text evidence="1">The complex is composed of two ATP-binding proteins (ModC), two transmembrane proteins (ModB) and a solute-binding protein (ModA).</text>
</comment>
<comment type="subcellular location">
    <subcellularLocation>
        <location evidence="1">Cell inner membrane</location>
        <topology evidence="1">Peripheral membrane protein</topology>
    </subcellularLocation>
</comment>
<comment type="similarity">
    <text evidence="1">Belongs to the ABC transporter superfamily. Molybdate importer (TC 3.A.1.8) family.</text>
</comment>